<organism>
    <name type="scientific">Agrostis stolonifera</name>
    <name type="common">Creeping bentgrass</name>
    <dbReference type="NCBI Taxonomy" id="63632"/>
    <lineage>
        <taxon>Eukaryota</taxon>
        <taxon>Viridiplantae</taxon>
        <taxon>Streptophyta</taxon>
        <taxon>Embryophyta</taxon>
        <taxon>Tracheophyta</taxon>
        <taxon>Spermatophyta</taxon>
        <taxon>Magnoliopsida</taxon>
        <taxon>Liliopsida</taxon>
        <taxon>Poales</taxon>
        <taxon>Poaceae</taxon>
        <taxon>BOP clade</taxon>
        <taxon>Pooideae</taxon>
        <taxon>Poodae</taxon>
        <taxon>Poeae</taxon>
        <taxon>Poeae Chloroplast Group 1 (Aveneae type)</taxon>
        <taxon>Agrostidodinae</taxon>
        <taxon>Agrostidinae</taxon>
        <taxon>Agrostis</taxon>
    </lineage>
</organism>
<reference key="1">
    <citation type="journal article" date="2007" name="Theor. Appl. Genet.">
        <title>Complete chloroplast genome sequences of Hordeum vulgare, Sorghum bicolor and Agrostis stolonifera, and comparative analyses with other grass genomes.</title>
        <authorList>
            <person name="Saski C."/>
            <person name="Lee S.-B."/>
            <person name="Fjellheim S."/>
            <person name="Guda C."/>
            <person name="Jansen R.K."/>
            <person name="Luo H."/>
            <person name="Tomkins J."/>
            <person name="Rognli O.A."/>
            <person name="Daniell H."/>
            <person name="Clarke J.L."/>
        </authorList>
    </citation>
    <scope>NUCLEOTIDE SEQUENCE [LARGE SCALE GENOMIC DNA]</scope>
    <source>
        <strain>cv. Penn A-4</strain>
    </source>
</reference>
<dbReference type="EC" id="4.1.1.39" evidence="1"/>
<dbReference type="EMBL" id="EF115543">
    <property type="protein sequence ID" value="ABK79588.1"/>
    <property type="molecule type" value="Genomic_DNA"/>
</dbReference>
<dbReference type="RefSeq" id="YP_874744.1">
    <property type="nucleotide sequence ID" value="NC_008591.1"/>
</dbReference>
<dbReference type="SMR" id="A1EA16"/>
<dbReference type="GeneID" id="4524986"/>
<dbReference type="GO" id="GO:0009507">
    <property type="term" value="C:chloroplast"/>
    <property type="evidence" value="ECO:0007669"/>
    <property type="project" value="UniProtKB-SubCell"/>
</dbReference>
<dbReference type="GO" id="GO:0000287">
    <property type="term" value="F:magnesium ion binding"/>
    <property type="evidence" value="ECO:0007669"/>
    <property type="project" value="UniProtKB-UniRule"/>
</dbReference>
<dbReference type="GO" id="GO:0004497">
    <property type="term" value="F:monooxygenase activity"/>
    <property type="evidence" value="ECO:0007669"/>
    <property type="project" value="UniProtKB-KW"/>
</dbReference>
<dbReference type="GO" id="GO:0016984">
    <property type="term" value="F:ribulose-bisphosphate carboxylase activity"/>
    <property type="evidence" value="ECO:0007669"/>
    <property type="project" value="UniProtKB-UniRule"/>
</dbReference>
<dbReference type="GO" id="GO:0009853">
    <property type="term" value="P:photorespiration"/>
    <property type="evidence" value="ECO:0007669"/>
    <property type="project" value="UniProtKB-KW"/>
</dbReference>
<dbReference type="GO" id="GO:0019253">
    <property type="term" value="P:reductive pentose-phosphate cycle"/>
    <property type="evidence" value="ECO:0007669"/>
    <property type="project" value="UniProtKB-UniRule"/>
</dbReference>
<dbReference type="CDD" id="cd08212">
    <property type="entry name" value="RuBisCO_large_I"/>
    <property type="match status" value="1"/>
</dbReference>
<dbReference type="FunFam" id="3.20.20.110:FF:000001">
    <property type="entry name" value="Ribulose bisphosphate carboxylase large chain"/>
    <property type="match status" value="1"/>
</dbReference>
<dbReference type="FunFam" id="3.30.70.150:FF:000001">
    <property type="entry name" value="Ribulose bisphosphate carboxylase large chain"/>
    <property type="match status" value="1"/>
</dbReference>
<dbReference type="Gene3D" id="3.20.20.110">
    <property type="entry name" value="Ribulose bisphosphate carboxylase, large subunit, C-terminal domain"/>
    <property type="match status" value="1"/>
</dbReference>
<dbReference type="Gene3D" id="3.30.70.150">
    <property type="entry name" value="RuBisCO large subunit, N-terminal domain"/>
    <property type="match status" value="1"/>
</dbReference>
<dbReference type="HAMAP" id="MF_01338">
    <property type="entry name" value="RuBisCO_L_type1"/>
    <property type="match status" value="1"/>
</dbReference>
<dbReference type="InterPro" id="IPR033966">
    <property type="entry name" value="RuBisCO"/>
</dbReference>
<dbReference type="InterPro" id="IPR020878">
    <property type="entry name" value="RuBisCo_large_chain_AS"/>
</dbReference>
<dbReference type="InterPro" id="IPR000685">
    <property type="entry name" value="RuBisCO_lsu_C"/>
</dbReference>
<dbReference type="InterPro" id="IPR036376">
    <property type="entry name" value="RuBisCO_lsu_C_sf"/>
</dbReference>
<dbReference type="InterPro" id="IPR017443">
    <property type="entry name" value="RuBisCO_lsu_fd_N"/>
</dbReference>
<dbReference type="InterPro" id="IPR036422">
    <property type="entry name" value="RuBisCO_lsu_N_sf"/>
</dbReference>
<dbReference type="InterPro" id="IPR020888">
    <property type="entry name" value="RuBisCO_lsuI"/>
</dbReference>
<dbReference type="NCBIfam" id="NF003252">
    <property type="entry name" value="PRK04208.1"/>
    <property type="match status" value="1"/>
</dbReference>
<dbReference type="PANTHER" id="PTHR42704">
    <property type="entry name" value="RIBULOSE BISPHOSPHATE CARBOXYLASE"/>
    <property type="match status" value="1"/>
</dbReference>
<dbReference type="PANTHER" id="PTHR42704:SF16">
    <property type="entry name" value="RIBULOSE BISPHOSPHATE CARBOXYLASE LARGE CHAIN"/>
    <property type="match status" value="1"/>
</dbReference>
<dbReference type="Pfam" id="PF00016">
    <property type="entry name" value="RuBisCO_large"/>
    <property type="match status" value="1"/>
</dbReference>
<dbReference type="Pfam" id="PF02788">
    <property type="entry name" value="RuBisCO_large_N"/>
    <property type="match status" value="1"/>
</dbReference>
<dbReference type="SFLD" id="SFLDG01052">
    <property type="entry name" value="RuBisCO"/>
    <property type="match status" value="1"/>
</dbReference>
<dbReference type="SFLD" id="SFLDS00014">
    <property type="entry name" value="RuBisCO"/>
    <property type="match status" value="1"/>
</dbReference>
<dbReference type="SFLD" id="SFLDG00301">
    <property type="entry name" value="RuBisCO-like_proteins"/>
    <property type="match status" value="1"/>
</dbReference>
<dbReference type="SUPFAM" id="SSF51649">
    <property type="entry name" value="RuBisCo, C-terminal domain"/>
    <property type="match status" value="1"/>
</dbReference>
<dbReference type="SUPFAM" id="SSF54966">
    <property type="entry name" value="RuBisCO, large subunit, small (N-terminal) domain"/>
    <property type="match status" value="1"/>
</dbReference>
<dbReference type="PROSITE" id="PS00157">
    <property type="entry name" value="RUBISCO_LARGE"/>
    <property type="match status" value="1"/>
</dbReference>
<geneLocation type="chloroplast"/>
<keyword id="KW-0007">Acetylation</keyword>
<keyword id="KW-0113">Calvin cycle</keyword>
<keyword id="KW-0120">Carbon dioxide fixation</keyword>
<keyword id="KW-0150">Chloroplast</keyword>
<keyword id="KW-1015">Disulfide bond</keyword>
<keyword id="KW-0456">Lyase</keyword>
<keyword id="KW-0460">Magnesium</keyword>
<keyword id="KW-0479">Metal-binding</keyword>
<keyword id="KW-0488">Methylation</keyword>
<keyword id="KW-0503">Monooxygenase</keyword>
<keyword id="KW-0560">Oxidoreductase</keyword>
<keyword id="KW-0601">Photorespiration</keyword>
<keyword id="KW-0602">Photosynthesis</keyword>
<keyword id="KW-0934">Plastid</keyword>
<comment type="function">
    <text evidence="1">RuBisCO catalyzes two reactions: the carboxylation of D-ribulose 1,5-bisphosphate, the primary event in carbon dioxide fixation, as well as the oxidative fragmentation of the pentose substrate in the photorespiration process. Both reactions occur simultaneously and in competition at the same active site.</text>
</comment>
<comment type="catalytic activity">
    <reaction evidence="1">
        <text>2 (2R)-3-phosphoglycerate + 2 H(+) = D-ribulose 1,5-bisphosphate + CO2 + H2O</text>
        <dbReference type="Rhea" id="RHEA:23124"/>
        <dbReference type="ChEBI" id="CHEBI:15377"/>
        <dbReference type="ChEBI" id="CHEBI:15378"/>
        <dbReference type="ChEBI" id="CHEBI:16526"/>
        <dbReference type="ChEBI" id="CHEBI:57870"/>
        <dbReference type="ChEBI" id="CHEBI:58272"/>
        <dbReference type="EC" id="4.1.1.39"/>
    </reaction>
</comment>
<comment type="catalytic activity">
    <reaction evidence="1">
        <text>D-ribulose 1,5-bisphosphate + O2 = 2-phosphoglycolate + (2R)-3-phosphoglycerate + 2 H(+)</text>
        <dbReference type="Rhea" id="RHEA:36631"/>
        <dbReference type="ChEBI" id="CHEBI:15378"/>
        <dbReference type="ChEBI" id="CHEBI:15379"/>
        <dbReference type="ChEBI" id="CHEBI:57870"/>
        <dbReference type="ChEBI" id="CHEBI:58033"/>
        <dbReference type="ChEBI" id="CHEBI:58272"/>
    </reaction>
</comment>
<comment type="cofactor">
    <cofactor evidence="1">
        <name>Mg(2+)</name>
        <dbReference type="ChEBI" id="CHEBI:18420"/>
    </cofactor>
    <text evidence="1">Binds 1 Mg(2+) ion per subunit.</text>
</comment>
<comment type="subunit">
    <text evidence="1">Heterohexadecamer of 8 large chains and 8 small chains; disulfide-linked. The disulfide link is formed within the large subunit homodimers.</text>
</comment>
<comment type="subcellular location">
    <subcellularLocation>
        <location>Plastid</location>
        <location>Chloroplast</location>
    </subcellularLocation>
</comment>
<comment type="PTM">
    <text evidence="1">The disulfide bond which can form in the large chain dimeric partners within the hexadecamer appears to be associated with oxidative stress and protein turnover.</text>
</comment>
<comment type="miscellaneous">
    <text evidence="1">The basic functional RuBisCO is composed of a large chain homodimer in a 'head-to-tail' conformation. In form I RuBisCO this homodimer is arranged in a barrel-like tetramer with the small subunits forming a tetrameric 'cap' on each end of the 'barrel'.</text>
</comment>
<comment type="similarity">
    <text evidence="1">Belongs to the RuBisCO large chain family. Type I subfamily.</text>
</comment>
<name>RBL_AGRST</name>
<gene>
    <name evidence="1" type="primary">rbcL</name>
</gene>
<accession>A1EA16</accession>
<evidence type="ECO:0000255" key="1">
    <source>
        <dbReference type="HAMAP-Rule" id="MF_01338"/>
    </source>
</evidence>
<feature type="propeptide" id="PRO_0000275353" evidence="1">
    <location>
        <begin position="1"/>
        <end position="2"/>
    </location>
</feature>
<feature type="chain" id="PRO_0000275354" description="Ribulose bisphosphate carboxylase large chain">
    <location>
        <begin position="3"/>
        <end position="477"/>
    </location>
</feature>
<feature type="active site" description="Proton acceptor" evidence="1">
    <location>
        <position position="175"/>
    </location>
</feature>
<feature type="active site" description="Proton acceptor" evidence="1">
    <location>
        <position position="294"/>
    </location>
</feature>
<feature type="binding site" description="in homodimeric partner" evidence="1">
    <location>
        <position position="123"/>
    </location>
    <ligand>
        <name>substrate</name>
    </ligand>
</feature>
<feature type="binding site" evidence="1">
    <location>
        <position position="173"/>
    </location>
    <ligand>
        <name>substrate</name>
    </ligand>
</feature>
<feature type="binding site" evidence="1">
    <location>
        <position position="177"/>
    </location>
    <ligand>
        <name>substrate</name>
    </ligand>
</feature>
<feature type="binding site" description="via carbamate group" evidence="1">
    <location>
        <position position="201"/>
    </location>
    <ligand>
        <name>Mg(2+)</name>
        <dbReference type="ChEBI" id="CHEBI:18420"/>
    </ligand>
</feature>
<feature type="binding site" evidence="1">
    <location>
        <position position="203"/>
    </location>
    <ligand>
        <name>Mg(2+)</name>
        <dbReference type="ChEBI" id="CHEBI:18420"/>
    </ligand>
</feature>
<feature type="binding site" evidence="1">
    <location>
        <position position="204"/>
    </location>
    <ligand>
        <name>Mg(2+)</name>
        <dbReference type="ChEBI" id="CHEBI:18420"/>
    </ligand>
</feature>
<feature type="binding site" evidence="1">
    <location>
        <position position="295"/>
    </location>
    <ligand>
        <name>substrate</name>
    </ligand>
</feature>
<feature type="binding site" evidence="1">
    <location>
        <position position="327"/>
    </location>
    <ligand>
        <name>substrate</name>
    </ligand>
</feature>
<feature type="binding site" evidence="1">
    <location>
        <position position="379"/>
    </location>
    <ligand>
        <name>substrate</name>
    </ligand>
</feature>
<feature type="site" description="Transition state stabilizer" evidence="1">
    <location>
        <position position="334"/>
    </location>
</feature>
<feature type="modified residue" description="N-acetylproline" evidence="1">
    <location>
        <position position="3"/>
    </location>
</feature>
<feature type="modified residue" description="N6,N6,N6-trimethyllysine" evidence="1">
    <location>
        <position position="14"/>
    </location>
</feature>
<feature type="modified residue" description="N6-carboxylysine" evidence="1">
    <location>
        <position position="201"/>
    </location>
</feature>
<feature type="disulfide bond" description="Interchain; in linked form" evidence="1">
    <location>
        <position position="247"/>
    </location>
</feature>
<sequence>MSPQTETKASVGFKAGVKDYKLTYYTPEYETKDTDILAAFRVSPQPGVPPEEAGAAVAAESSTGTWTTVWTDGLTSLDRYKGRCYHIEPVAGEDSQWICYVAYPLDLFEEGSVTNMFTSIVGNVFGFKALRALRLEDLRIPPAYTKTFQGPPHGIQVERDKLNKYGRPLLGCTIKPKLGLSAKNYGRACYECLRGGLDFTKDDENVNSQPFMRWRDRFVFCAEAIYKAQAETGEIKGHYLNATAGTCEEMIKRAVFARELGVPIVMHDYITGGFTANTSLAHYCRDNGLLLHIHRAMHAVIDRQKNHGMHFRVLAKALRMSGGDHIHAGTVVGKLEGEREMTLGFVDLLRDDFIEKDRARGIFFTQDWVSMPGVIPVASGGIHVWHMPALTEIFGDDSVLQFGGGTLGHPWGNAPGAAANRVALEACVQARNEGRDLAREGNEIIRAACKWSPELAAACEVWKAIKFEFEPVDTIDK</sequence>
<proteinExistence type="inferred from homology"/>
<protein>
    <recommendedName>
        <fullName evidence="1">Ribulose bisphosphate carboxylase large chain</fullName>
        <shortName evidence="1">RuBisCO large subunit</shortName>
        <ecNumber evidence="1">4.1.1.39</ecNumber>
    </recommendedName>
</protein>